<accession>O74212</accession>
<organism>
    <name type="scientific">Mortierella alpina</name>
    <name type="common">Oleaginous fungus</name>
    <name type="synonym">Mortierella renispora</name>
    <dbReference type="NCBI Taxonomy" id="64518"/>
    <lineage>
        <taxon>Eukaryota</taxon>
        <taxon>Fungi</taxon>
        <taxon>Fungi incertae sedis</taxon>
        <taxon>Mucoromycota</taxon>
        <taxon>Mortierellomycotina</taxon>
        <taxon>Mortierellomycetes</taxon>
        <taxon>Mortierellales</taxon>
        <taxon>Mortierellaceae</taxon>
        <taxon>Mortierella</taxon>
    </lineage>
</organism>
<protein>
    <recommendedName>
        <fullName>Acyl-lipid (8-3)-desaturase</fullName>
        <ecNumber evidence="4">1.14.19.30</ecNumber>
    </recommendedName>
    <alternativeName>
        <fullName evidence="6">Delta(5) fatty acid desaturase</fullName>
        <shortName evidence="6">Delta-5 fatty acid desaturase</shortName>
    </alternativeName>
</protein>
<keyword id="KW-0249">Electron transport</keyword>
<keyword id="KW-0275">Fatty acid biosynthesis</keyword>
<keyword id="KW-0276">Fatty acid metabolism</keyword>
<keyword id="KW-0349">Heme</keyword>
<keyword id="KW-0408">Iron</keyword>
<keyword id="KW-0444">Lipid biosynthesis</keyword>
<keyword id="KW-0443">Lipid metabolism</keyword>
<keyword id="KW-0472">Membrane</keyword>
<keyword id="KW-0479">Metal-binding</keyword>
<keyword id="KW-0560">Oxidoreductase</keyword>
<keyword id="KW-0812">Transmembrane</keyword>
<keyword id="KW-1133">Transmembrane helix</keyword>
<keyword id="KW-0813">Transport</keyword>
<sequence>MGTDQGKTFTWEELAAHNTKGDLFLAIRGRVYDVTKFLSRHPGGVDTLLLGAGRDVTPVFEMYHAFGAADAIMKKYYVGTLVSNELPVFPEPTVFHKTIKTRVEGYFTDRDIDPKNRPEIWGRYALIFGSLIASYYAQLFVPFVVERTWLQVVFAIIMGFACAQVGLNPLHDASHFSVTHNPTVWKILGATHDFFNGASYLVWMYQHMLGHHPYTNIAGADPDVSTFEPDVRRIKPNQKWFVNHINQDMFVPFLYGLLAFKVRIQDINILYFVKTNDAIRVNPISTWHTVMFWGGKAFFVWYRLIVPLQYLPLGKVLLLFTVADMVSSYWLALTFQANHVVEEVQWPLPDENGIIQKDWAAMQVETTQDYAHDSHLWTSITGSLNYQAVHHLFPNVSQHHYPDILAIIKNTCSEYKVPYLVKDTFWQAFASHLEHLRVLGLRPKEE</sequence>
<comment type="function">
    <text evidence="4 5">Fatty acid desaturase that introduces a cis double bond at the 5-position in 20-carbon polyunsaturated fatty acids incorporated in a glycerolipid that contain a Delta(8) double bond. Involved in the conversion of di-homo-Delta-linolenic acid to arachidonic acid. Essential in the production of eicosanoids.</text>
</comment>
<comment type="catalytic activity">
    <reaction evidence="4">
        <text>an (8Z,11Z,14Z)-icosatrienoyl-containing glycerolipid + 2 Fe(II)-[cytochrome b5] + O2 + 2 H(+) = (5Z,8Z,11Z,14Z)-eicosatetraenoyl-containing glycerolipid + 2 Fe(III)-[cytochrome b5] + 2 H2O</text>
        <dbReference type="Rhea" id="RHEA:46260"/>
        <dbReference type="Rhea" id="RHEA-COMP:10438"/>
        <dbReference type="Rhea" id="RHEA-COMP:10439"/>
        <dbReference type="ChEBI" id="CHEBI:15377"/>
        <dbReference type="ChEBI" id="CHEBI:15378"/>
        <dbReference type="ChEBI" id="CHEBI:15379"/>
        <dbReference type="ChEBI" id="CHEBI:29033"/>
        <dbReference type="ChEBI" id="CHEBI:29034"/>
        <dbReference type="ChEBI" id="CHEBI:90076"/>
        <dbReference type="ChEBI" id="CHEBI:90077"/>
        <dbReference type="EC" id="1.14.19.30"/>
    </reaction>
</comment>
<comment type="catalytic activity">
    <reaction evidence="4">
        <text>an (8Z,11Z,14Z,17Z)-eicosatetraenoyl-containing glycerolipid + 2 Fe(II)-[cytochrome b5] + O2 + 2 H(+) = a (5Z,8Z,11Z,14Z,17Z)-eicosapentaenoyl-containing glycerolipid + 2 Fe(III)-[cytochrome b5] + 2 H2O</text>
        <dbReference type="Rhea" id="RHEA:46264"/>
        <dbReference type="Rhea" id="RHEA-COMP:10438"/>
        <dbReference type="Rhea" id="RHEA-COMP:10439"/>
        <dbReference type="ChEBI" id="CHEBI:15377"/>
        <dbReference type="ChEBI" id="CHEBI:15378"/>
        <dbReference type="ChEBI" id="CHEBI:15379"/>
        <dbReference type="ChEBI" id="CHEBI:29033"/>
        <dbReference type="ChEBI" id="CHEBI:29034"/>
        <dbReference type="ChEBI" id="CHEBI:90082"/>
        <dbReference type="ChEBI" id="CHEBI:90083"/>
        <dbReference type="EC" id="1.14.19.30"/>
    </reaction>
</comment>
<comment type="cofactor">
    <cofactor evidence="1">
        <name>Fe(2+)</name>
        <dbReference type="ChEBI" id="CHEBI:29033"/>
    </cofactor>
</comment>
<comment type="subcellular location">
    <subcellularLocation>
        <location evidence="2">Membrane</location>
        <topology evidence="2">Multi-pass membrane protein</topology>
    </subcellularLocation>
</comment>
<comment type="domain">
    <text evidence="7">The cytochrome b5 heme-binding domain acts as the direct electron donor to the active site of the desaturase, and does not require an external cytochrome.</text>
</comment>
<comment type="similarity">
    <text evidence="7">Belongs to the fatty acid desaturase type 1 family.</text>
</comment>
<feature type="chain" id="PRO_0000185409" description="Acyl-lipid (8-3)-desaturase">
    <location>
        <begin position="1"/>
        <end position="446"/>
    </location>
</feature>
<feature type="transmembrane region" description="Helical" evidence="2">
    <location>
        <begin position="125"/>
        <end position="145"/>
    </location>
</feature>
<feature type="transmembrane region" description="Helical" evidence="2">
    <location>
        <begin position="150"/>
        <end position="170"/>
    </location>
</feature>
<feature type="domain" description="Cytochrome b5 heme-binding" evidence="3">
    <location>
        <begin position="6"/>
        <end position="82"/>
    </location>
</feature>
<feature type="short sequence motif" description="Histidine box-1">
    <location>
        <begin position="171"/>
        <end position="175"/>
    </location>
</feature>
<feature type="short sequence motif" description="Histidine box-2">
    <location>
        <begin position="207"/>
        <end position="212"/>
    </location>
</feature>
<feature type="short sequence motif" description="Histidine box-3">
    <location>
        <begin position="387"/>
        <end position="391"/>
    </location>
</feature>
<feature type="binding site" description="axial binding residue" evidence="3">
    <location>
        <position position="41"/>
    </location>
    <ligand>
        <name>heme</name>
        <dbReference type="ChEBI" id="CHEBI:30413"/>
    </ligand>
    <ligandPart>
        <name>Fe</name>
        <dbReference type="ChEBI" id="CHEBI:18248"/>
    </ligandPart>
</feature>
<feature type="binding site" description="axial binding residue" evidence="3">
    <location>
        <position position="64"/>
    </location>
    <ligand>
        <name>heme</name>
        <dbReference type="ChEBI" id="CHEBI:30413"/>
    </ligand>
    <ligandPart>
        <name>Fe</name>
        <dbReference type="ChEBI" id="CHEBI:18248"/>
    </ligandPart>
</feature>
<feature type="sequence variant" description="In strain: ATCC 32221.">
    <original>G</original>
    <variation>D</variation>
    <location>
        <position position="21"/>
    </location>
</feature>
<feature type="sequence variant" description="In strain: ATCC 32221.">
    <original>V</original>
    <variation>I</variation>
    <location>
        <position position="88"/>
    </location>
</feature>
<feature type="sequence variant" description="In strain: ATCC 32221.">
    <original>D</original>
    <variation>N</variation>
    <location>
        <position position="111"/>
    </location>
</feature>
<feature type="sequence variant" description="In strain: ATCC 32221.">
    <original>F</original>
    <variation>S</variation>
    <location>
        <position position="227"/>
    </location>
</feature>
<feature type="sequence variant" description="In strain: ATCC 32221.">
    <original>D</original>
    <variation>H</variation>
    <location>
        <position position="248"/>
    </location>
</feature>
<evidence type="ECO:0000250" key="1">
    <source>
        <dbReference type="UniProtKB" id="O00767"/>
    </source>
</evidence>
<evidence type="ECO:0000255" key="2"/>
<evidence type="ECO:0000255" key="3">
    <source>
        <dbReference type="PROSITE-ProRule" id="PRU00279"/>
    </source>
</evidence>
<evidence type="ECO:0000269" key="4">
    <source>
    </source>
</evidence>
<evidence type="ECO:0000269" key="5">
    <source>
    </source>
</evidence>
<evidence type="ECO:0000303" key="6">
    <source>
    </source>
</evidence>
<evidence type="ECO:0000305" key="7"/>
<reference key="1">
    <citation type="journal article" date="1998" name="J. Biol. Chem.">
        <title>Isolation of a delta5-fatty acid desaturase gene from Mortierella alpina.</title>
        <authorList>
            <person name="Michaelson L.V."/>
            <person name="Lazarus C.M."/>
            <person name="Griffiths G."/>
            <person name="Napier J.A."/>
            <person name="Stobart A.K."/>
        </authorList>
    </citation>
    <scope>NUCLEOTIDE SEQUENCE [MRNA]</scope>
    <scope>FUNCTION</scope>
    <scope>CATALYTIC ACTIVITY</scope>
    <source>
        <strain>CBS 210.32 / BCRC 32738 / CECT 2981</strain>
    </source>
</reference>
<reference key="2">
    <citation type="journal article" date="1998" name="J. Biol. Chem.">
        <title>Identification of delta5-desaturase from Mortierella alpina by heterologous expression in baker's yeast and canola.</title>
        <authorList>
            <person name="Knutzon D.S."/>
            <person name="Thurmond J.M."/>
            <person name="Huang Y.-S."/>
            <person name="Chaudhary S."/>
            <person name="Bobik E.G. Jr."/>
            <person name="Chan G.M."/>
            <person name="Kirchner S.J."/>
            <person name="Mukerji P."/>
        </authorList>
    </citation>
    <scope>NUCLEOTIDE SEQUENCE [MRNA]</scope>
    <scope>FUNCTION</scope>
    <source>
        <strain>ATCC 32221 / CBS 527.72 / M135</strain>
    </source>
</reference>
<name>D5FAD_MORAP</name>
<proteinExistence type="evidence at protein level"/>
<gene>
    <name type="primary">DES1</name>
</gene>
<dbReference type="EC" id="1.14.19.30" evidence="4"/>
<dbReference type="EMBL" id="AF054824">
    <property type="protein sequence ID" value="AAC39508.1"/>
    <property type="molecule type" value="mRNA"/>
</dbReference>
<dbReference type="EMBL" id="AF067654">
    <property type="protein sequence ID" value="AAC72755.1"/>
    <property type="molecule type" value="mRNA"/>
</dbReference>
<dbReference type="SMR" id="O74212"/>
<dbReference type="BioCyc" id="MetaCyc:MONOMER-19037"/>
<dbReference type="BRENDA" id="1.14.19.30">
    <property type="organism ID" value="3431"/>
</dbReference>
<dbReference type="GO" id="GO:0016020">
    <property type="term" value="C:membrane"/>
    <property type="evidence" value="ECO:0007669"/>
    <property type="project" value="UniProtKB-SubCell"/>
</dbReference>
<dbReference type="GO" id="GO:0102866">
    <property type="term" value="F:acyl-lipid (8-3)-desaturase activity"/>
    <property type="evidence" value="ECO:0007669"/>
    <property type="project" value="UniProtKB-EC"/>
</dbReference>
<dbReference type="GO" id="GO:0020037">
    <property type="term" value="F:heme binding"/>
    <property type="evidence" value="ECO:0007669"/>
    <property type="project" value="InterPro"/>
</dbReference>
<dbReference type="GO" id="GO:0046872">
    <property type="term" value="F:metal ion binding"/>
    <property type="evidence" value="ECO:0007669"/>
    <property type="project" value="UniProtKB-KW"/>
</dbReference>
<dbReference type="GO" id="GO:0042759">
    <property type="term" value="P:long-chain fatty acid biosynthetic process"/>
    <property type="evidence" value="ECO:0007669"/>
    <property type="project" value="UniProtKB-ARBA"/>
</dbReference>
<dbReference type="GO" id="GO:0006636">
    <property type="term" value="P:unsaturated fatty acid biosynthetic process"/>
    <property type="evidence" value="ECO:0007669"/>
    <property type="project" value="UniProtKB-ARBA"/>
</dbReference>
<dbReference type="CDD" id="cd03506">
    <property type="entry name" value="Delta6-FADS-like"/>
    <property type="match status" value="1"/>
</dbReference>
<dbReference type="FunFam" id="3.10.120.10:FF:000007">
    <property type="entry name" value="Sulfite oxidase, mitochondrial"/>
    <property type="match status" value="1"/>
</dbReference>
<dbReference type="Gene3D" id="3.10.120.10">
    <property type="entry name" value="Cytochrome b5-like heme/steroid binding domain"/>
    <property type="match status" value="1"/>
</dbReference>
<dbReference type="InterPro" id="IPR001199">
    <property type="entry name" value="Cyt_B5-like_heme/steroid-bd"/>
</dbReference>
<dbReference type="InterPro" id="IPR036400">
    <property type="entry name" value="Cyt_B5-like_heme/steroid_sf"/>
</dbReference>
<dbReference type="InterPro" id="IPR018506">
    <property type="entry name" value="Cyt_B5_heme-BS"/>
</dbReference>
<dbReference type="InterPro" id="IPR005804">
    <property type="entry name" value="FA_desaturase_dom"/>
</dbReference>
<dbReference type="InterPro" id="IPR012171">
    <property type="entry name" value="Fatty_acid_desaturase"/>
</dbReference>
<dbReference type="PANTHER" id="PTHR19353:SF19">
    <property type="entry name" value="DELTA(5) FATTY ACID DESATURASE C-RELATED"/>
    <property type="match status" value="1"/>
</dbReference>
<dbReference type="PANTHER" id="PTHR19353">
    <property type="entry name" value="FATTY ACID DESATURASE 2"/>
    <property type="match status" value="1"/>
</dbReference>
<dbReference type="Pfam" id="PF00173">
    <property type="entry name" value="Cyt-b5"/>
    <property type="match status" value="1"/>
</dbReference>
<dbReference type="Pfam" id="PF00487">
    <property type="entry name" value="FA_desaturase"/>
    <property type="match status" value="1"/>
</dbReference>
<dbReference type="PIRSF" id="PIRSF015921">
    <property type="entry name" value="FA_sphinglp_des"/>
    <property type="match status" value="1"/>
</dbReference>
<dbReference type="PRINTS" id="PR00363">
    <property type="entry name" value="CYTOCHROMEB5"/>
</dbReference>
<dbReference type="SMART" id="SM01117">
    <property type="entry name" value="Cyt-b5"/>
    <property type="match status" value="1"/>
</dbReference>
<dbReference type="SUPFAM" id="SSF55856">
    <property type="entry name" value="Cytochrome b5-like heme/steroid binding domain"/>
    <property type="match status" value="1"/>
</dbReference>
<dbReference type="PROSITE" id="PS00191">
    <property type="entry name" value="CYTOCHROME_B5_1"/>
    <property type="match status" value="1"/>
</dbReference>
<dbReference type="PROSITE" id="PS50255">
    <property type="entry name" value="CYTOCHROME_B5_2"/>
    <property type="match status" value="1"/>
</dbReference>